<evidence type="ECO:0000250" key="1">
    <source>
        <dbReference type="UniProtKB" id="Q4H424"/>
    </source>
</evidence>
<evidence type="ECO:0000255" key="2">
    <source>
        <dbReference type="PROSITE-ProRule" id="PRU00805"/>
    </source>
</evidence>
<evidence type="ECO:0000269" key="3">
    <source>
    </source>
</evidence>
<evidence type="ECO:0000269" key="4">
    <source>
    </source>
</evidence>
<evidence type="ECO:0000303" key="5">
    <source>
    </source>
</evidence>
<evidence type="ECO:0000305" key="6"/>
<protein>
    <recommendedName>
        <fullName evidence="5">2-oxoglutarate-Fe(II) type oxidoreductase ppzD</fullName>
        <ecNumber evidence="4">1.14.11.-</ecNumber>
        <ecNumber evidence="4">1.14.11.57</ecNumber>
    </recommendedName>
    <alternativeName>
        <fullName evidence="5">Pyrrolopyrazine biosynthesis cluster protein D</fullName>
    </alternativeName>
</protein>
<reference key="1">
    <citation type="journal article" date="2019" name="Environ. Microbiol.">
        <title>Orthologous peramine and pyrrolopyrazine-producing biosynthetic gene clusters in Metarhizium rileyi, Metarhizium majus and Cladonia grayi.</title>
        <authorList>
            <person name="Berry D."/>
            <person name="Mace W."/>
            <person name="Rehner S.A."/>
            <person name="Grage K."/>
            <person name="Dijkwel P.P."/>
            <person name="Young C.A."/>
            <person name="Scott B."/>
        </authorList>
    </citation>
    <scope>NUCLEOTIDE SEQUENCE [GENOMIC DNA]</scope>
    <scope>FUNCTION</scope>
    <scope>PATHWAY</scope>
    <source>
        <strain>ARSEF 297</strain>
    </source>
</reference>
<reference key="2">
    <citation type="journal article" date="2024" name="J. Am. Chem. Soc.">
        <title>Two Iron(II), alpha-Ketoglutarate-Dependent Enzymes Encoded by the PPZ Gene Cluster of Metarhizium majus Enable Production of 8-Hydroxyperamine.</title>
        <authorList>
            <person name="Rothchild K.W."/>
            <person name="Hagar M."/>
            <person name="Berry D."/>
            <person name="Ryan K.S."/>
        </authorList>
    </citation>
    <scope>FUNCTION</scope>
    <scope>CATALYTIC ACTIVITY</scope>
    <scope>PATHWAY</scope>
</reference>
<sequence length="349" mass="39927">MRSVSPQSTMARIPERRVRTLDFAQFRHGEPSGSRGFCRELVDCLSSVGFVKIRNHGISGQEIENVFVMSQLFFSLPQAAKGKAAHPPEANPHRGYSYVGQEKLSRVKDYEKGKREITDVYDIKHYPIDRDARQESYDQGAAVDNLYPNRWPDEQDIPGFRVLMETFYERCHEVHQDILRAIAIGFDLSPSFLTDLCCQNTSELRLNHYPSVHPSSLRKGAKRISEHTDFGTVTLLFQDSVGGLEIEDQNTPGTYFPVLSERKSDIIVNIGDCIQRWTNDKIHSTSHRVVLPEDTDALTKDRYSVAYFGKPSRSQLVGSLREFVKEGEKPKYNDISAWQYNQEKLVLTY</sequence>
<name>PPZD_METMF</name>
<feature type="chain" id="PRO_0000461613" description="2-oxoglutarate-Fe(II) type oxidoreductase ppzD">
    <location>
        <begin position="1"/>
        <end position="349"/>
    </location>
</feature>
<feature type="domain" description="Fe2OG dioxygenase" evidence="2">
    <location>
        <begin position="200"/>
        <end position="311"/>
    </location>
</feature>
<feature type="binding site" evidence="2">
    <location>
        <position position="227"/>
    </location>
    <ligand>
        <name>Fe cation</name>
        <dbReference type="ChEBI" id="CHEBI:24875"/>
    </ligand>
</feature>
<feature type="binding site" evidence="2">
    <location>
        <position position="229"/>
    </location>
    <ligand>
        <name>Fe cation</name>
        <dbReference type="ChEBI" id="CHEBI:24875"/>
    </ligand>
</feature>
<feature type="binding site" evidence="2">
    <location>
        <position position="287"/>
    </location>
    <ligand>
        <name>Fe cation</name>
        <dbReference type="ChEBI" id="CHEBI:24875"/>
    </ligand>
</feature>
<feature type="binding site" evidence="2">
    <location>
        <position position="302"/>
    </location>
    <ligand>
        <name>2-oxoglutarate</name>
        <dbReference type="ChEBI" id="CHEBI:16810"/>
    </ligand>
</feature>
<accession>A0A455ZMR3</accession>
<comment type="function">
    <text evidence="1 3 4">2-oxoglutarate-Fe(II) type oxidoreductase; part of the gene cluster that mediates the biosynthesis of pyrrolopyrazines, secondary metabolites showing insecticidal activity (PubMed:30452111). Within the pathway, ppzD converts L-proline into trans-4-hydroxy-L-proline as a major product, yielding a key precursor for peramine biosynthesis. PpzD is also able to convert L-proline into trans-3-hydroxy-L-proline (PubMed:38578094). The single multifunctional NRPS ppzA is sufficient to produce peramine via condensation of 1-pyrroline-5-carboxylate and arginine, N-methylation of the alpha-amino group of arginine and reduction of the thioester and the cyclization to form an iminium ion resulting in release from the peptide synthetase. Deprotonation of this intermediate and oxidation of the pyrroline ring would give rise to peramine (By similarity). In Epichloe species that produce only peramine, the peramine synthetase gene is not localized in a gene cluster, in contrast to Metarhizium species that contain additional pyrrolopyrazine biosynthesis genes. The 2-oxoglutarate-Fe(II) type oxidoreductase ppzC hydroxylates peramine to yield the newly identified compound 8-hydroxyperamine whereas ppzD converts L-proline into trans-4-hydroxy-L-proline, a precursor of peramine biosynthesis (PubMed:38578094).</text>
</comment>
<comment type="catalytic activity">
    <reaction evidence="4">
        <text>L-proline + 2-oxoglutarate + O2 = trans-4-hydroxy-L-proline + succinate + CO2</text>
        <dbReference type="Rhea" id="RHEA:51508"/>
        <dbReference type="ChEBI" id="CHEBI:15379"/>
        <dbReference type="ChEBI" id="CHEBI:16526"/>
        <dbReference type="ChEBI" id="CHEBI:16810"/>
        <dbReference type="ChEBI" id="CHEBI:30031"/>
        <dbReference type="ChEBI" id="CHEBI:58375"/>
        <dbReference type="ChEBI" id="CHEBI:60039"/>
        <dbReference type="EC" id="1.14.11.57"/>
    </reaction>
    <physiologicalReaction direction="left-to-right" evidence="4">
        <dbReference type="Rhea" id="RHEA:51509"/>
    </physiologicalReaction>
</comment>
<comment type="catalytic activity">
    <reaction evidence="4">
        <text>L-proline + 2-oxoglutarate + O2 = trans-3-hydroxy-L-proline + succinate + CO2</text>
        <dbReference type="Rhea" id="RHEA:82159"/>
        <dbReference type="ChEBI" id="CHEBI:15379"/>
        <dbReference type="ChEBI" id="CHEBI:16526"/>
        <dbReference type="ChEBI" id="CHEBI:16810"/>
        <dbReference type="ChEBI" id="CHEBI:30031"/>
        <dbReference type="ChEBI" id="CHEBI:57938"/>
        <dbReference type="ChEBI" id="CHEBI:60039"/>
    </reaction>
    <physiologicalReaction direction="left-to-right" evidence="4">
        <dbReference type="Rhea" id="RHEA:82160"/>
    </physiologicalReaction>
</comment>
<comment type="catalytic activity">
    <reaction evidence="4">
        <text>D-proline + 2-oxoglutarate + O2 = cis-4-hydroxy-D-proline + succinate + CO2</text>
        <dbReference type="Rhea" id="RHEA:82163"/>
        <dbReference type="ChEBI" id="CHEBI:15379"/>
        <dbReference type="ChEBI" id="CHEBI:16526"/>
        <dbReference type="ChEBI" id="CHEBI:16810"/>
        <dbReference type="ChEBI" id="CHEBI:30031"/>
        <dbReference type="ChEBI" id="CHEBI:57690"/>
        <dbReference type="ChEBI" id="CHEBI:57726"/>
    </reaction>
    <physiologicalReaction direction="left-to-right" evidence="4">
        <dbReference type="Rhea" id="RHEA:82164"/>
    </physiologicalReaction>
</comment>
<comment type="cofactor">
    <cofactor evidence="2">
        <name>Fe(2+)</name>
        <dbReference type="ChEBI" id="CHEBI:29033"/>
    </cofactor>
    <text evidence="2">Binds 1 Fe(2+) ion per subunit.</text>
</comment>
<comment type="pathway">
    <text evidence="4">Secondary metabolite biosynthesis.</text>
</comment>
<comment type="similarity">
    <text evidence="6">Belongs to the iron/ascorbate-dependent oxidoreductase family.</text>
</comment>
<dbReference type="EC" id="1.14.11.-" evidence="4"/>
<dbReference type="EC" id="1.14.11.57" evidence="4"/>
<dbReference type="EMBL" id="BK010672">
    <property type="protein sequence ID" value="DAC76719.1"/>
    <property type="molecule type" value="Genomic_DNA"/>
</dbReference>
<dbReference type="GO" id="GO:0051213">
    <property type="term" value="F:dioxygenase activity"/>
    <property type="evidence" value="ECO:0007669"/>
    <property type="project" value="UniProtKB-KW"/>
</dbReference>
<dbReference type="GO" id="GO:0046872">
    <property type="term" value="F:metal ion binding"/>
    <property type="evidence" value="ECO:0007669"/>
    <property type="project" value="UniProtKB-KW"/>
</dbReference>
<dbReference type="GO" id="GO:0044283">
    <property type="term" value="P:small molecule biosynthetic process"/>
    <property type="evidence" value="ECO:0007669"/>
    <property type="project" value="UniProtKB-ARBA"/>
</dbReference>
<dbReference type="Gene3D" id="2.60.120.330">
    <property type="entry name" value="B-lactam Antibiotic, Isopenicillin N Synthase, Chain"/>
    <property type="match status" value="1"/>
</dbReference>
<dbReference type="InterPro" id="IPR026992">
    <property type="entry name" value="DIOX_N"/>
</dbReference>
<dbReference type="InterPro" id="IPR044861">
    <property type="entry name" value="IPNS-like_FE2OG_OXY"/>
</dbReference>
<dbReference type="InterPro" id="IPR027443">
    <property type="entry name" value="IPNS-like_sf"/>
</dbReference>
<dbReference type="InterPro" id="IPR050231">
    <property type="entry name" value="Iron_ascorbate_oxido_reductase"/>
</dbReference>
<dbReference type="InterPro" id="IPR005123">
    <property type="entry name" value="Oxoglu/Fe-dep_dioxygenase_dom"/>
</dbReference>
<dbReference type="PANTHER" id="PTHR47990">
    <property type="entry name" value="2-OXOGLUTARATE (2OG) AND FE(II)-DEPENDENT OXYGENASE SUPERFAMILY PROTEIN-RELATED"/>
    <property type="match status" value="1"/>
</dbReference>
<dbReference type="Pfam" id="PF03171">
    <property type="entry name" value="2OG-FeII_Oxy"/>
    <property type="match status" value="1"/>
</dbReference>
<dbReference type="Pfam" id="PF14226">
    <property type="entry name" value="DIOX_N"/>
    <property type="match status" value="1"/>
</dbReference>
<dbReference type="SUPFAM" id="SSF51197">
    <property type="entry name" value="Clavaminate synthase-like"/>
    <property type="match status" value="1"/>
</dbReference>
<dbReference type="PROSITE" id="PS51471">
    <property type="entry name" value="FE2OG_OXY"/>
    <property type="match status" value="1"/>
</dbReference>
<organism>
    <name type="scientific">Metarhizium majus (strain ARSEF 297)</name>
    <dbReference type="NCBI Taxonomy" id="1276143"/>
    <lineage>
        <taxon>Eukaryota</taxon>
        <taxon>Fungi</taxon>
        <taxon>Dikarya</taxon>
        <taxon>Ascomycota</taxon>
        <taxon>Pezizomycotina</taxon>
        <taxon>Sordariomycetes</taxon>
        <taxon>Hypocreomycetidae</taxon>
        <taxon>Hypocreales</taxon>
        <taxon>Clavicipitaceae</taxon>
        <taxon>Metarhizium</taxon>
        <taxon>Metarhizium majus</taxon>
    </lineage>
</organism>
<gene>
    <name type="primary">ppzD</name>
</gene>
<keyword id="KW-0223">Dioxygenase</keyword>
<keyword id="KW-0408">Iron</keyword>
<keyword id="KW-0479">Metal-binding</keyword>
<keyword id="KW-0560">Oxidoreductase</keyword>
<proteinExistence type="evidence at protein level"/>